<accession>P69010</accession>
<accession>P02336</accession>
<feature type="peptide" id="PRO_0000044827" description="Protamine-Z">
    <location>
        <begin position="1"/>
        <end position="31"/>
    </location>
</feature>
<feature type="region of interest" description="Disordered" evidence="1">
    <location>
        <begin position="1"/>
        <end position="31"/>
    </location>
</feature>
<sequence length="31" mass="4165">ARRRRSRRASRPVRRRRPRRVSRRRRARRRR</sequence>
<name>PRTZ_CLUHA</name>
<organism>
    <name type="scientific">Clupea harengus</name>
    <name type="common">Atlantic herring</name>
    <dbReference type="NCBI Taxonomy" id="7950"/>
    <lineage>
        <taxon>Eukaryota</taxon>
        <taxon>Metazoa</taxon>
        <taxon>Chordata</taxon>
        <taxon>Craniata</taxon>
        <taxon>Vertebrata</taxon>
        <taxon>Euteleostomi</taxon>
        <taxon>Actinopterygii</taxon>
        <taxon>Neopterygii</taxon>
        <taxon>Teleostei</taxon>
        <taxon>Clupei</taxon>
        <taxon>Clupeiformes</taxon>
        <taxon>Clupeoidei</taxon>
        <taxon>Clupeidae</taxon>
        <taxon>Clupea</taxon>
    </lineage>
</organism>
<reference key="1">
    <citation type="submission" date="1970-08" db="PIR data bank">
        <authorList>
            <person name="Chang W.J."/>
            <person name="Nukushina M."/>
            <person name="Ishii S."/>
            <person name="Nakahara C."/>
            <person name="Ando T."/>
        </authorList>
    </citation>
    <scope>PROTEIN SEQUENCE</scope>
</reference>
<reference key="2">
    <citation type="journal article" date="1991" name="Acta Crystallogr. B">
        <title>Structure of porcine insulin cocrystallized with clupeine Z.</title>
        <authorList>
            <person name="Balschmidt P."/>
            <person name="Hansen F.B."/>
            <person name="Dodson E."/>
            <person name="Dodson G."/>
            <person name="Korber F."/>
        </authorList>
    </citation>
    <scope>X-RAY CRYSTALLOGRAPHY (2.0 ANGSTROMS)</scope>
</reference>
<comment type="function">
    <text>Protamines substitute for histones in the chromatin of sperm during the haploid phase of spermatogenesis. They compact sperm DNA into a highly condensed, stable and inactive complex.</text>
</comment>
<comment type="subcellular location">
    <subcellularLocation>
        <location>Nucleus</location>
    </subcellularLocation>
    <subcellularLocation>
        <location>Chromosome</location>
    </subcellularLocation>
</comment>
<comment type="tissue specificity">
    <text>Testis.</text>
</comment>
<comment type="miscellaneous">
    <text>Clupeine Z is probably the result of a crossover between the genes for clupeines YI and YII.</text>
</comment>
<evidence type="ECO:0000256" key="1">
    <source>
        <dbReference type="SAM" id="MobiDB-lite"/>
    </source>
</evidence>
<protein>
    <recommendedName>
        <fullName>Protamine-Z</fullName>
    </recommendedName>
    <alternativeName>
        <fullName>Clupeine-Z</fullName>
    </alternativeName>
</protein>
<keyword id="KW-0002">3D-structure</keyword>
<keyword id="KW-0158">Chromosome</keyword>
<keyword id="KW-0217">Developmental protein</keyword>
<keyword id="KW-0221">Differentiation</keyword>
<keyword id="KW-0903">Direct protein sequencing</keyword>
<keyword id="KW-0226">DNA condensation</keyword>
<keyword id="KW-0238">DNA-binding</keyword>
<keyword id="KW-0544">Nucleosome core</keyword>
<keyword id="KW-0539">Nucleus</keyword>
<keyword id="KW-1185">Reference proteome</keyword>
<keyword id="KW-0744">Spermatogenesis</keyword>
<dbReference type="PIR" id="A37576">
    <property type="entry name" value="CLHRZA"/>
</dbReference>
<dbReference type="PDB" id="7INS">
    <property type="method" value="X-ray"/>
    <property type="resolution" value="2.00 A"/>
    <property type="chains" value="G=-"/>
</dbReference>
<dbReference type="PDBsum" id="7INS"/>
<dbReference type="Proteomes" id="UP000515152">
    <property type="component" value="Unplaced"/>
</dbReference>
<dbReference type="GO" id="GO:0000786">
    <property type="term" value="C:nucleosome"/>
    <property type="evidence" value="ECO:0007669"/>
    <property type="project" value="UniProtKB-KW"/>
</dbReference>
<dbReference type="GO" id="GO:0005634">
    <property type="term" value="C:nucleus"/>
    <property type="evidence" value="ECO:0007669"/>
    <property type="project" value="UniProtKB-SubCell"/>
</dbReference>
<dbReference type="GO" id="GO:0003677">
    <property type="term" value="F:DNA binding"/>
    <property type="evidence" value="ECO:0007669"/>
    <property type="project" value="UniProtKB-KW"/>
</dbReference>
<dbReference type="GO" id="GO:0030154">
    <property type="term" value="P:cell differentiation"/>
    <property type="evidence" value="ECO:0007669"/>
    <property type="project" value="UniProtKB-KW"/>
</dbReference>
<dbReference type="GO" id="GO:0030261">
    <property type="term" value="P:chromosome condensation"/>
    <property type="evidence" value="ECO:0007669"/>
    <property type="project" value="UniProtKB-KW"/>
</dbReference>
<dbReference type="GO" id="GO:0007283">
    <property type="term" value="P:spermatogenesis"/>
    <property type="evidence" value="ECO:0007669"/>
    <property type="project" value="UniProtKB-KW"/>
</dbReference>
<proteinExistence type="evidence at protein level"/>